<sequence length="203" mass="22824">MSDEIEDRPRTRSRTPSVDTQSYTINEEAHHIITDSDSSSSENEDGEGNETNSSDDSSESGSVERFLDEIVPTTSTSFIPNDTPDPATLFDITEYIFDSIVQSTNACDFSEAFALQAKTSAVINSKSMELKNLIEQTKVRLPELQAKFKNGTQTLRTIRKNLDNAKSRIQVMNDVLQTDYPIEFNQARDKILERTLDSDEEVI</sequence>
<evidence type="ECO:0000250" key="1"/>
<evidence type="ECO:0000255" key="2"/>
<evidence type="ECO:0000256" key="3">
    <source>
        <dbReference type="SAM" id="MobiDB-lite"/>
    </source>
</evidence>
<evidence type="ECO:0000305" key="4"/>
<feature type="chain" id="PRO_0000410667" description="Biogenesis of lysosome-related organelles complex 1 subunit KXD1">
    <location>
        <begin position="1"/>
        <end position="203"/>
    </location>
</feature>
<feature type="region of interest" description="Disordered" evidence="3">
    <location>
        <begin position="1"/>
        <end position="62"/>
    </location>
</feature>
<feature type="coiled-coil region" evidence="2">
    <location>
        <begin position="126"/>
        <end position="178"/>
    </location>
</feature>
<feature type="compositionally biased region" description="Polar residues" evidence="3">
    <location>
        <begin position="14"/>
        <end position="25"/>
    </location>
</feature>
<feature type="compositionally biased region" description="Low complexity" evidence="3">
    <location>
        <begin position="49"/>
        <end position="61"/>
    </location>
</feature>
<gene>
    <name type="primary">KXD1</name>
    <name type="ordered locus">CAGL0H03355g</name>
</gene>
<reference key="1">
    <citation type="journal article" date="2004" name="Nature">
        <title>Genome evolution in yeasts.</title>
        <authorList>
            <person name="Dujon B."/>
            <person name="Sherman D."/>
            <person name="Fischer G."/>
            <person name="Durrens P."/>
            <person name="Casaregola S."/>
            <person name="Lafontaine I."/>
            <person name="de Montigny J."/>
            <person name="Marck C."/>
            <person name="Neuveglise C."/>
            <person name="Talla E."/>
            <person name="Goffard N."/>
            <person name="Frangeul L."/>
            <person name="Aigle M."/>
            <person name="Anthouard V."/>
            <person name="Babour A."/>
            <person name="Barbe V."/>
            <person name="Barnay S."/>
            <person name="Blanchin S."/>
            <person name="Beckerich J.-M."/>
            <person name="Beyne E."/>
            <person name="Bleykasten C."/>
            <person name="Boisrame A."/>
            <person name="Boyer J."/>
            <person name="Cattolico L."/>
            <person name="Confanioleri F."/>
            <person name="de Daruvar A."/>
            <person name="Despons L."/>
            <person name="Fabre E."/>
            <person name="Fairhead C."/>
            <person name="Ferry-Dumazet H."/>
            <person name="Groppi A."/>
            <person name="Hantraye F."/>
            <person name="Hennequin C."/>
            <person name="Jauniaux N."/>
            <person name="Joyet P."/>
            <person name="Kachouri R."/>
            <person name="Kerrest A."/>
            <person name="Koszul R."/>
            <person name="Lemaire M."/>
            <person name="Lesur I."/>
            <person name="Ma L."/>
            <person name="Muller H."/>
            <person name="Nicaud J.-M."/>
            <person name="Nikolski M."/>
            <person name="Oztas S."/>
            <person name="Ozier-Kalogeropoulos O."/>
            <person name="Pellenz S."/>
            <person name="Potier S."/>
            <person name="Richard G.-F."/>
            <person name="Straub M.-L."/>
            <person name="Suleau A."/>
            <person name="Swennen D."/>
            <person name="Tekaia F."/>
            <person name="Wesolowski-Louvel M."/>
            <person name="Westhof E."/>
            <person name="Wirth B."/>
            <person name="Zeniou-Meyer M."/>
            <person name="Zivanovic Y."/>
            <person name="Bolotin-Fukuhara M."/>
            <person name="Thierry A."/>
            <person name="Bouchier C."/>
            <person name="Caudron B."/>
            <person name="Scarpelli C."/>
            <person name="Gaillardin C."/>
            <person name="Weissenbach J."/>
            <person name="Wincker P."/>
            <person name="Souciet J.-L."/>
        </authorList>
    </citation>
    <scope>NUCLEOTIDE SEQUENCE [LARGE SCALE GENOMIC DNA]</scope>
    <source>
        <strain>ATCC 2001 / BCRC 20586 / JCM 3761 / NBRC 0622 / NRRL Y-65 / CBS 138</strain>
    </source>
</reference>
<proteinExistence type="inferred from homology"/>
<keyword id="KW-0175">Coiled coil</keyword>
<keyword id="KW-0967">Endosome</keyword>
<keyword id="KW-1185">Reference proteome</keyword>
<keyword id="KW-0813">Transport</keyword>
<organism>
    <name type="scientific">Candida glabrata (strain ATCC 2001 / BCRC 20586 / JCM 3761 / NBRC 0622 / NRRL Y-65 / CBS 138)</name>
    <name type="common">Yeast</name>
    <name type="synonym">Nakaseomyces glabratus</name>
    <dbReference type="NCBI Taxonomy" id="284593"/>
    <lineage>
        <taxon>Eukaryota</taxon>
        <taxon>Fungi</taxon>
        <taxon>Dikarya</taxon>
        <taxon>Ascomycota</taxon>
        <taxon>Saccharomycotina</taxon>
        <taxon>Saccharomycetes</taxon>
        <taxon>Saccharomycetales</taxon>
        <taxon>Saccharomycetaceae</taxon>
        <taxon>Nakaseomyces</taxon>
    </lineage>
</organism>
<protein>
    <recommendedName>
        <fullName>Biogenesis of lysosome-related organelles complex 1 subunit KXD1</fullName>
        <shortName>BLOC-1 subunit KXD1</shortName>
    </recommendedName>
    <alternativeName>
        <fullName>KxDL homolog</fullName>
    </alternativeName>
</protein>
<dbReference type="EMBL" id="CR380954">
    <property type="protein sequence ID" value="CAG59872.1"/>
    <property type="molecule type" value="Genomic_DNA"/>
</dbReference>
<dbReference type="RefSeq" id="XP_446939.1">
    <property type="nucleotide sequence ID" value="XM_446939.1"/>
</dbReference>
<dbReference type="SMR" id="Q6FS55"/>
<dbReference type="FunCoup" id="Q6FS55">
    <property type="interactions" value="102"/>
</dbReference>
<dbReference type="STRING" id="284593.Q6FS55"/>
<dbReference type="EnsemblFungi" id="CAGL0H03355g-T">
    <property type="protein sequence ID" value="CAGL0H03355g-T-p1"/>
    <property type="gene ID" value="CAGL0H03355g"/>
</dbReference>
<dbReference type="KEGG" id="cgr:2888863"/>
<dbReference type="CGD" id="CAL0132014">
    <property type="gene designation" value="CAGL0H03355g"/>
</dbReference>
<dbReference type="VEuPathDB" id="FungiDB:B1J91_H03355g"/>
<dbReference type="VEuPathDB" id="FungiDB:CAGL0H03355g"/>
<dbReference type="eggNOG" id="ENOG502S1H5">
    <property type="taxonomic scope" value="Eukaryota"/>
</dbReference>
<dbReference type="HOGENOM" id="CLU_099155_0_0_1"/>
<dbReference type="InParanoid" id="Q6FS55"/>
<dbReference type="OMA" id="TPMFDTS"/>
<dbReference type="Proteomes" id="UP000002428">
    <property type="component" value="Chromosome H"/>
</dbReference>
<dbReference type="GO" id="GO:0031083">
    <property type="term" value="C:BLOC-1 complex"/>
    <property type="evidence" value="ECO:0007669"/>
    <property type="project" value="EnsemblFungi"/>
</dbReference>
<dbReference type="GO" id="GO:0005768">
    <property type="term" value="C:endosome"/>
    <property type="evidence" value="ECO:0007669"/>
    <property type="project" value="UniProtKB-SubCell"/>
</dbReference>
<dbReference type="GO" id="GO:0009318">
    <property type="term" value="C:exodeoxyribonuclease VII complex"/>
    <property type="evidence" value="ECO:0007669"/>
    <property type="project" value="InterPro"/>
</dbReference>
<dbReference type="GO" id="GO:0008855">
    <property type="term" value="F:exodeoxyribonuclease VII activity"/>
    <property type="evidence" value="ECO:0007669"/>
    <property type="project" value="InterPro"/>
</dbReference>
<dbReference type="GO" id="GO:0006308">
    <property type="term" value="P:DNA catabolic process"/>
    <property type="evidence" value="ECO:0007669"/>
    <property type="project" value="InterPro"/>
</dbReference>
<dbReference type="GO" id="GO:0007032">
    <property type="term" value="P:endosome organization"/>
    <property type="evidence" value="ECO:0007669"/>
    <property type="project" value="EnsemblFungi"/>
</dbReference>
<dbReference type="GO" id="GO:0032880">
    <property type="term" value="P:regulation of protein localization"/>
    <property type="evidence" value="ECO:0007669"/>
    <property type="project" value="EnsemblFungi"/>
</dbReference>
<dbReference type="InterPro" id="IPR051390">
    <property type="entry name" value="BLOC-1_subunit_KXD1"/>
</dbReference>
<dbReference type="InterPro" id="IPR037004">
    <property type="entry name" value="Exonuc_VII_ssu_sf"/>
</dbReference>
<dbReference type="InterPro" id="IPR019371">
    <property type="entry name" value="KxDL_dom"/>
</dbReference>
<dbReference type="PANTHER" id="PTHR37787">
    <property type="entry name" value="BIOGENESIS OF LYSOSOME-RELATED ORGANELLES COMPLEX 1 SUBUNIT KXD1"/>
    <property type="match status" value="1"/>
</dbReference>
<dbReference type="PANTHER" id="PTHR37787:SF1">
    <property type="entry name" value="BIOGENESIS OF LYSOSOME-RELATED ORGANELLES COMPLEX 1 SUBUNIT KXD1"/>
    <property type="match status" value="1"/>
</dbReference>
<dbReference type="Pfam" id="PF10241">
    <property type="entry name" value="KxDL"/>
    <property type="match status" value="1"/>
</dbReference>
<dbReference type="SUPFAM" id="SSF116842">
    <property type="entry name" value="XseB-like"/>
    <property type="match status" value="1"/>
</dbReference>
<name>KXD1_CANGA</name>
<accession>Q6FS55</accession>
<comment type="function">
    <text evidence="1">Component of the biogenesis of lysosome-related organelles complex-1 (BLOC-1) involved in endosomal cargo sorting.</text>
</comment>
<comment type="subunit">
    <text evidence="1">Component of the biogenesis of lysosome-related organelles complex-1 (BLOC-1).</text>
</comment>
<comment type="subcellular location">
    <subcellularLocation>
        <location evidence="1">Endosome</location>
    </subcellularLocation>
</comment>
<comment type="similarity">
    <text evidence="4">Belongs to the KXD1 family.</text>
</comment>